<comment type="function">
    <text evidence="2 3">Molecular chaperone implicated in a wide variety of cellular processes, including protection of the proteome from stress, folding and transport of newly synthesized polypeptides, activation of proteolysis of misfolded proteins and the formation and dissociation of protein complexes. Plays a pivotal role in the protein quality control system, ensuring the correct folding of proteins, the re-folding of misfolded proteins and controlling the targeting of proteins for subsequent degradation. This is achieved through cycles of ATP binding, ATP hydrolysis and ADP release, mediated by co-chaperones. The co-chaperones have been shown to not only regulate different steps of the ATPase cycle, but they also have an individual specificity such that one co-chaperone may promote folding of a substrate while another may promote degradation. The affinity for polypeptides is regulated by its nucleotide bound state. In the ATP-bound form, it has a low affinity for substrate proteins. However, upon hydrolysis of the ATP to ADP, it undergoes a conformational change that increases its affinity for substrate proteins. It goes through repeated cycles of ATP hydrolysis and nucleotide exchange, which permits cycles of substrate binding and release. The co-chaperones are of three types: J-domain co-chaperones such as HSP40s (stimulate ATPase hydrolysis by HSP70), the nucleotide exchange factors (NEF) such as BAG1/2/3 (facilitate conversion of HSP70 from the ADP-bound to the ATP-bound state thereby promoting substrate release), and the TPR domain chaperones such as HOPX and STUB1. Maintains protein homeostasis during cellular stress through two opposing mechanisms: protein refolding and degradation. Its acetylation/deacetylation state determines whether it functions in protein refolding or protein degradation by controlling the competitive binding of co-chaperones HOPX and STUB1. During the early stress response, the acetylated form binds to HOPX which assists in chaperone-mediated protein refolding, thereafter, it is deacetylated and binds to ubiquitin ligase STUB1 that promotes ubiquitin-mediated protein degradation. Regulates centrosome integrity during mitosis, and is required for the maintenance of a functional mitotic centrosome that supports the assembly of a bipolar mitotic spindle. Enhances STUB1-mediated SMAD3 ubiquitination and degradation and facilitates STUB1-mediated inhibition of TGF-beta signaling. Essential for STUB1-mediated ubiquitination and degradation of FOXP3 in regulatory T-cells (Treg) during inflammation. Required as a co-chaperone for optimal STUB1/CHIP ubiquitination of NFATC3 (By similarity). Negatively regulates heat shock-induced HSF1 transcriptional activity during the attenuation and recovery phase period of the heat shock response.</text>
</comment>
<comment type="subunit">
    <text evidence="2 3 6 7 8">Component of the CatSper complex (By similarity). Identified in a IGF2BP1-dependent mRNP granule complex containing untranslated mRNAs (By similarity). Interacts with CHCHD3, DNAJC7, IRAK1BP1, PPP5C and TSC2 (By similarity). Interacts with TERT; the interaction occurs in the absence of the RNA component, TERC, and dissociates once the TERT complex has formed (By similarity). Interacts with METTL21A (By similarity). Interacts with DNAAF2 (PubMed:19052621). Interacts with TRIM5 (via B30.2/SPRY domain) (By similarity). Interacts with PRKN (By similarity). Interacts with FOXP3 (PubMed:23973223). Interacts with NOD2; the interaction enhances NOD2 stability (By similarity). Interacts with DNAJC9 (via J domain) (By similarity). Interacts with ATF5; the interaction protects ATF5 from degradation via proteasome-dependent and caspase-dependent processes (By similarity). Interacts with RNF207 (via the C-terminus); this interaction additively increases KCNH2 expression (By similarity). Interacts with HSF1 (via transactivation domain); this interaction results in the inhibition of heat shock- and HSF1-induced transcriptional activity during the attenuation and recovery phase period of the heat shock response. Interacts with NAA10, HSP40, HSP90 and HDAC4. Interacts (via C-terminus) with STUB1 (via TPR repeats) (By similarity). The acetylated form and the non-acetylated form interact with HOPX and STUB1 respectively. Interacts with NEDD1 and SMAD3. Interacts (via NBD) with BAG1, BAG2, BAG3 and HSPH1/HSP105. Interacts with DNAJC8 (By similarity). Interacts with NLRP12. Interacts with PGLYRP (PubMed:14585845). Forms a ternary complex with BAG3 and HSPB8 (By similarity).</text>
</comment>
<comment type="subcellular location">
    <subcellularLocation>
        <location evidence="2">Cytoplasm</location>
    </subcellularLocation>
    <subcellularLocation>
        <location evidence="2">Nucleus</location>
    </subcellularLocation>
    <subcellularLocation>
        <location evidence="2">Cytoplasm</location>
        <location evidence="2">Cytoskeleton</location>
        <location evidence="2">Microtubule organizing center</location>
        <location evidence="2">Centrosome</location>
    </subcellularLocation>
    <subcellularLocation>
        <location evidence="6">Secreted</location>
    </subcellularLocation>
    <text evidence="2">Localized in cytoplasmic mRNP granules containing untranslated mRNAs.</text>
</comment>
<comment type="domain">
    <text evidence="2">The N-terminal nucleotide binding domain (NBD) (also known as the ATPase domain) is responsible for binding and hydrolyzing ATP. The C-terminal substrate-binding domain (SBD) (also known as peptide-binding domain) binds to the client/substrate proteins. The two domains are allosterically coupled so that, when ATP is bound to the NBD, the SBD binds relatively weakly to clients. When ADP is bound in the NBD, a conformational change enhances the affinity of the SBD for client proteins.</text>
</comment>
<comment type="PTM">
    <text evidence="2">In response to cellular stress, acetylated at Lys-77 by NA110 and then gradually deacetylated by HDAC4 at later stages. Acetylation enhances its chaperone activity and also determines whether it will function as a chaperone for protein refolding or degradation by controlling its binding to co-chaperones HOPX and STUB1. The acetylated form and the non-acetylated form bind to HOPX and STUB1 respectively. Acetylation also protects cells against various types of cellular stress.</text>
</comment>
<comment type="similarity">
    <text evidence="9">Belongs to the heat shock protein 70 family.</text>
</comment>
<reference key="1">
    <citation type="journal article" date="1994" name="Gene">
        <title>Structure and expression of an inducible HSP70-encoding gene from Mus musculus.</title>
        <authorList>
            <person name="Perry M.D."/>
            <person name="Aujame L."/>
            <person name="Shtang S."/>
            <person name="Moran L.A."/>
        </authorList>
    </citation>
    <scope>NUCLEOTIDE SEQUENCE [GENOMIC DNA / MRNA]</scope>
    <source>
        <tissue>Liver</tissue>
    </source>
</reference>
<reference key="2">
    <citation type="journal article" date="2003" name="Genome Res.">
        <title>Analysis of the gene-dense major histocompatibility complex class III region and its comparison to mouse.</title>
        <authorList>
            <person name="Xie T."/>
            <person name="Rowen L."/>
            <person name="Aguado B."/>
            <person name="Ahearn M.E."/>
            <person name="Madan A."/>
            <person name="Qin S."/>
            <person name="Campbell R.D."/>
            <person name="Hood L."/>
        </authorList>
    </citation>
    <scope>NUCLEOTIDE SEQUENCE [LARGE SCALE GENOMIC DNA]</scope>
    <source>
        <strain>129</strain>
    </source>
</reference>
<reference key="3">
    <citation type="journal article" date="2004" name="Genome Res.">
        <title>The status, quality, and expansion of the NIH full-length cDNA project: the Mammalian Gene Collection (MGC).</title>
        <authorList>
            <consortium name="The MGC Project Team"/>
        </authorList>
    </citation>
    <scope>NUCLEOTIDE SEQUENCE [LARGE SCALE MRNA]</scope>
    <source>
        <strain>C57BL/6J</strain>
        <tissue>Brain</tissue>
    </source>
</reference>
<reference key="4">
    <citation type="submission" date="2007-04" db="UniProtKB">
        <authorList>
            <person name="Lubec G."/>
            <person name="Kang S.U."/>
        </authorList>
    </citation>
    <scope>PROTEIN SEQUENCE OF 26-49 AND 103-112</scope>
    <scope>IDENTIFICATION BY MASS SPECTROMETRY</scope>
    <source>
        <strain>C57BL/6J</strain>
        <tissue>Brain</tissue>
    </source>
</reference>
<reference key="5">
    <citation type="journal article" date="1986" name="J. Biol. Chem.">
        <title>Molecular cloning and analysis of DNA complementary to three mouse Mr = 68,000 heat shock protein mRNAs.</title>
        <authorList>
            <person name="Lowe D.G."/>
            <person name="Moran L.A."/>
        </authorList>
    </citation>
    <scope>NUCLEOTIDE SEQUENCE [MRNA] OF 221-641</scope>
</reference>
<reference key="6">
    <citation type="journal article" date="2004" name="J. Biol. Chem.">
        <title>Peptidoglycan recognition protein tag7 forms a cytotoxic complex with heat shock protein 70 in solution and in lymphocytes.</title>
        <authorList>
            <person name="Sashchenko L.P."/>
            <person name="Dukhanina E.A."/>
            <person name="Yashin D.V."/>
            <person name="Shatalov Y.V."/>
            <person name="Romanova E.A."/>
            <person name="Korobko E.V."/>
            <person name="Demin A.V."/>
            <person name="Lukyanova T.I."/>
            <person name="Kabanova O.D."/>
            <person name="Khaidukov S.V."/>
            <person name="Kiselev S.L."/>
            <person name="Gabibov A.G."/>
            <person name="Gnuchev N.V."/>
            <person name="Georgiev G.P."/>
        </authorList>
    </citation>
    <scope>INTERACTION WITH PGLYRP1</scope>
    <scope>SUBCELLULAR LOCATION</scope>
</reference>
<reference key="7">
    <citation type="journal article" date="2008" name="Nature">
        <title>Ktu/PF13 is required for cytoplasmic pre-assembly of axonemal dyneins.</title>
        <authorList>
            <person name="Omran H."/>
            <person name="Kobayashi D."/>
            <person name="Olbrich H."/>
            <person name="Tsukahara T."/>
            <person name="Loges N.T."/>
            <person name="Hagiwara H."/>
            <person name="Zhang Q."/>
            <person name="Leblond G."/>
            <person name="O'Toole E."/>
            <person name="Hara C."/>
            <person name="Mizuno H."/>
            <person name="Kawano H."/>
            <person name="Fliegauf M."/>
            <person name="Yagi T."/>
            <person name="Koshida S."/>
            <person name="Miyawaki A."/>
            <person name="Zentgraf H."/>
            <person name="Seithe H."/>
            <person name="Reinhardt R."/>
            <person name="Watanabe Y."/>
            <person name="Kamiya R."/>
            <person name="Mitchell D.R."/>
            <person name="Takeda H."/>
        </authorList>
    </citation>
    <scope>INTERACTION WITH DNAAF2</scope>
</reference>
<reference key="8">
    <citation type="journal article" date="2010" name="Cell">
        <title>A tissue-specific atlas of mouse protein phosphorylation and expression.</title>
        <authorList>
            <person name="Huttlin E.L."/>
            <person name="Jedrychowski M.P."/>
            <person name="Elias J.E."/>
            <person name="Goswami T."/>
            <person name="Rad R."/>
            <person name="Beausoleil S.A."/>
            <person name="Villen J."/>
            <person name="Haas W."/>
            <person name="Sowa M.E."/>
            <person name="Gygi S.P."/>
        </authorList>
    </citation>
    <scope>PHOSPHORYLATION [LARGE SCALE ANALYSIS] AT SER-604</scope>
    <scope>IDENTIFICATION BY MASS SPECTROMETRY [LARGE SCALE ANALYSIS]</scope>
    <source>
        <tissue>Brain</tissue>
        <tissue>Kidney</tissue>
        <tissue>Lung</tissue>
        <tissue>Testis</tissue>
    </source>
</reference>
<reference key="9">
    <citation type="journal article" date="2013" name="Immunity">
        <title>The ubiquitin ligase Stub1 negatively modulates regulatory T cell suppressive activity by promoting degradation of the transcription factor Foxp3.</title>
        <authorList>
            <person name="Chen Z."/>
            <person name="Barbi J."/>
            <person name="Bu S."/>
            <person name="Yang H.Y."/>
            <person name="Li Z."/>
            <person name="Gao Y."/>
            <person name="Jinasena D."/>
            <person name="Fu J."/>
            <person name="Lin F."/>
            <person name="Chen C."/>
            <person name="Zhang J."/>
            <person name="Yu N."/>
            <person name="Li X."/>
            <person name="Shan Z."/>
            <person name="Nie J."/>
            <person name="Gao Z."/>
            <person name="Tian H."/>
            <person name="Li Y."/>
            <person name="Yao Z."/>
            <person name="Zheng Y."/>
            <person name="Park B.V."/>
            <person name="Pan Z."/>
            <person name="Zhang J."/>
            <person name="Dang E."/>
            <person name="Li Z."/>
            <person name="Wang H."/>
            <person name="Luo W."/>
            <person name="Li L."/>
            <person name="Semenza G.L."/>
            <person name="Zheng S.G."/>
            <person name="Loser K."/>
            <person name="Tsun A."/>
            <person name="Greene M.I."/>
            <person name="Pardoll D.M."/>
            <person name="Pan F."/>
            <person name="Li B."/>
        </authorList>
    </citation>
    <scope>INTERACTION WITH FOXP3</scope>
</reference>
<accession>Q61696</accession>
<accession>Q61697</accession>
<accession>Q7TQD8</accession>
<accession>Q9QWJ5</accession>
<name>HS71A_MOUSE</name>
<gene>
    <name type="primary">Hspa1a</name>
    <name type="synonym">Hsp70-3</name>
    <name type="synonym">Hsp70A1</name>
</gene>
<protein>
    <recommendedName>
        <fullName>Heat shock 70 kDa protein 1A</fullName>
    </recommendedName>
    <alternativeName>
        <fullName>Heat shock 70 kDa protein 3</fullName>
        <shortName>HSP70.3</shortName>
    </alternativeName>
    <alternativeName>
        <fullName>Hsp68</fullName>
    </alternativeName>
</protein>
<organism>
    <name type="scientific">Mus musculus</name>
    <name type="common">Mouse</name>
    <dbReference type="NCBI Taxonomy" id="10090"/>
    <lineage>
        <taxon>Eukaryota</taxon>
        <taxon>Metazoa</taxon>
        <taxon>Chordata</taxon>
        <taxon>Craniata</taxon>
        <taxon>Vertebrata</taxon>
        <taxon>Euteleostomi</taxon>
        <taxon>Mammalia</taxon>
        <taxon>Eutheria</taxon>
        <taxon>Euarchontoglires</taxon>
        <taxon>Glires</taxon>
        <taxon>Rodentia</taxon>
        <taxon>Myomorpha</taxon>
        <taxon>Muroidea</taxon>
        <taxon>Muridae</taxon>
        <taxon>Murinae</taxon>
        <taxon>Mus</taxon>
        <taxon>Mus</taxon>
    </lineage>
</organism>
<sequence length="641" mass="70079">MAKNTAIGIDLGTTYSCVGVFQHGKVEIIANDQGNRTTPSYVAFTDTERLIGDAAKNQVALNPQNTVFDAKRLIGRKFGDAVVQSDMKHWPFQVVNDGDKPKVQVNYKGESRSFFPEEISSMVLTKMKEIAEAYLGHPVTNAVITVPAYFNDSQRQATKDAGVIAGLNVLRIINEPTAAAIAYGLDRTGKGERNVLIFDLGGGTFDVSILTIDDGIFEVKATAGDTHLGGEDFDNRLVSHFVEEFKRKHKKDISQNKRAVRRLRTACERAKRTLSSSTQASLEIDSLFEGIDFYTSITRARFEELCSDLFRGTLEPVEKALRDAKMDKAQIHDLVLVGGSTRIPKVQKLLQDFFNGRDLNKSINPDEAVAYGAAVQAAILMGDKSENVQDLLLLDVAPLSLGLETAGGVMTALIKRNSTIPTKQTQTFTTYSDNQPGVLIQVYEGERAMTRDNNLLGRFELSGIPPAPRGVPQIEVTFDIDANGILNVTATDKSTGKANKITITNDKGRLSKEEIERMVQEAERYKAEDEVQRDRVAAKNALESYAFNMKSAVEDEGLKGKLSEADKKKVLDKCQEVISWLDSNTLADKEEFVHKREELERVCSPIISGLYQGAGAPGAGGFGAQAPKGASGSGPTIEEVD</sequence>
<proteinExistence type="evidence at protein level"/>
<keyword id="KW-0007">Acetylation</keyword>
<keyword id="KW-0067">ATP-binding</keyword>
<keyword id="KW-0143">Chaperone</keyword>
<keyword id="KW-0963">Cytoplasm</keyword>
<keyword id="KW-0206">Cytoskeleton</keyword>
<keyword id="KW-0903">Direct protein sequencing</keyword>
<keyword id="KW-0488">Methylation</keyword>
<keyword id="KW-0547">Nucleotide-binding</keyword>
<keyword id="KW-0539">Nucleus</keyword>
<keyword id="KW-0597">Phosphoprotein</keyword>
<keyword id="KW-1185">Reference proteome</keyword>
<keyword id="KW-0964">Secreted</keyword>
<keyword id="KW-0346">Stress response</keyword>
<dbReference type="EMBL" id="M76613">
    <property type="protein sequence ID" value="AAA57233.1"/>
    <property type="molecule type" value="Genomic_DNA"/>
</dbReference>
<dbReference type="EMBL" id="AF109906">
    <property type="protein sequence ID" value="AAC84169.1"/>
    <property type="molecule type" value="Genomic_DNA"/>
</dbReference>
<dbReference type="EMBL" id="BC054782">
    <property type="protein sequence ID" value="AAH54782.1"/>
    <property type="molecule type" value="mRNA"/>
</dbReference>
<dbReference type="EMBL" id="M12571">
    <property type="protein sequence ID" value="AAA57234.1"/>
    <property type="molecule type" value="mRNA"/>
</dbReference>
<dbReference type="EMBL" id="M12572">
    <property type="protein sequence ID" value="AAA57235.1"/>
    <property type="molecule type" value="mRNA"/>
</dbReference>
<dbReference type="CCDS" id="CCDS50080.1"/>
<dbReference type="PIR" id="A26283">
    <property type="entry name" value="A26283"/>
</dbReference>
<dbReference type="RefSeq" id="NP_034609.2">
    <property type="nucleotide sequence ID" value="NM_010479.2"/>
</dbReference>
<dbReference type="SMR" id="Q61696"/>
<dbReference type="BioGRID" id="228756">
    <property type="interactions" value="33"/>
</dbReference>
<dbReference type="CORUM" id="Q61696"/>
<dbReference type="FunCoup" id="Q61696">
    <property type="interactions" value="2191"/>
</dbReference>
<dbReference type="IntAct" id="Q61696">
    <property type="interactions" value="6"/>
</dbReference>
<dbReference type="MINT" id="Q61696"/>
<dbReference type="STRING" id="10090.ENSMUSP00000084586"/>
<dbReference type="CarbonylDB" id="Q61696"/>
<dbReference type="GlyGen" id="Q61696">
    <property type="glycosylation" value="2 sites, 1 O-linked glycan (1 site)"/>
</dbReference>
<dbReference type="iPTMnet" id="Q61696"/>
<dbReference type="PhosphoSitePlus" id="Q61696"/>
<dbReference type="REPRODUCTION-2DPAGE" id="Q61696"/>
<dbReference type="jPOST" id="Q61696"/>
<dbReference type="PaxDb" id="10090-ENSMUSP00000084586"/>
<dbReference type="ProteomicsDB" id="273139"/>
<dbReference type="Pumba" id="Q61696"/>
<dbReference type="DNASU" id="193740"/>
<dbReference type="Ensembl" id="ENSMUST00000087328.4">
    <property type="protein sequence ID" value="ENSMUSP00000084586.3"/>
    <property type="gene ID" value="ENSMUSG00000091971.4"/>
</dbReference>
<dbReference type="GeneID" id="193740"/>
<dbReference type="KEGG" id="mmu:193740"/>
<dbReference type="UCSC" id="uc008cep.1">
    <property type="organism name" value="mouse"/>
</dbReference>
<dbReference type="AGR" id="MGI:96244"/>
<dbReference type="CTD" id="3303"/>
<dbReference type="MGI" id="MGI:96244">
    <property type="gene designation" value="Hspa1a"/>
</dbReference>
<dbReference type="VEuPathDB" id="HostDB:ENSMUSG00000091971"/>
<dbReference type="eggNOG" id="KOG0101">
    <property type="taxonomic scope" value="Eukaryota"/>
</dbReference>
<dbReference type="GeneTree" id="ENSGT00940000161215"/>
<dbReference type="HOGENOM" id="CLU_005965_3_0_1"/>
<dbReference type="InParanoid" id="Q61696"/>
<dbReference type="OMA" id="CNPIMTR"/>
<dbReference type="OrthoDB" id="2401965at2759"/>
<dbReference type="PhylomeDB" id="Q61696"/>
<dbReference type="TreeFam" id="TF105042"/>
<dbReference type="Reactome" id="R-MMU-3371453">
    <property type="pathway name" value="Regulation of HSF1-mediated heat shock response"/>
</dbReference>
<dbReference type="Reactome" id="R-MMU-3371497">
    <property type="pathway name" value="HSP90 chaperone cycle for steroid hormone receptors (SHR) in the presence of ligand"/>
</dbReference>
<dbReference type="Reactome" id="R-MMU-3371568">
    <property type="pathway name" value="Attenuation phase"/>
</dbReference>
<dbReference type="Reactome" id="R-MMU-3371571">
    <property type="pathway name" value="HSF1-dependent transactivation"/>
</dbReference>
<dbReference type="Reactome" id="R-MMU-450408">
    <property type="pathway name" value="AUF1 (hnRNP D0) binds and destabilizes mRNA"/>
</dbReference>
<dbReference type="Reactome" id="R-MMU-6798695">
    <property type="pathway name" value="Neutrophil degranulation"/>
</dbReference>
<dbReference type="Reactome" id="R-MMU-9833482">
    <property type="pathway name" value="PKR-mediated signaling"/>
</dbReference>
<dbReference type="Reactome" id="R-MMU-9841251">
    <property type="pathway name" value="Mitochondrial unfolded protein response (UPRmt)"/>
</dbReference>
<dbReference type="BioGRID-ORCS" id="193740">
    <property type="hits" value="1 hit in 79 CRISPR screens"/>
</dbReference>
<dbReference type="ChiTaRS" id="Hspa1a">
    <property type="organism name" value="mouse"/>
</dbReference>
<dbReference type="PRO" id="PR:Q61696"/>
<dbReference type="Proteomes" id="UP000000589">
    <property type="component" value="Chromosome 17"/>
</dbReference>
<dbReference type="RNAct" id="Q61696">
    <property type="molecule type" value="protein"/>
</dbReference>
<dbReference type="Bgee" id="ENSMUSG00000091971">
    <property type="expression patterns" value="Expressed in substantia propria of cornea and 198 other cell types or tissues"/>
</dbReference>
<dbReference type="ExpressionAtlas" id="Q61696">
    <property type="expression patterns" value="baseline and differential"/>
</dbReference>
<dbReference type="GO" id="GO:0005813">
    <property type="term" value="C:centrosome"/>
    <property type="evidence" value="ECO:0000250"/>
    <property type="project" value="UniProtKB"/>
</dbReference>
<dbReference type="GO" id="GO:0005737">
    <property type="term" value="C:cytoplasm"/>
    <property type="evidence" value="ECO:0000314"/>
    <property type="project" value="MGI"/>
</dbReference>
<dbReference type="GO" id="GO:0005576">
    <property type="term" value="C:extracellular region"/>
    <property type="evidence" value="ECO:0007669"/>
    <property type="project" value="UniProtKB-SubCell"/>
</dbReference>
<dbReference type="GO" id="GO:0005739">
    <property type="term" value="C:mitochondrion"/>
    <property type="evidence" value="ECO:0000250"/>
    <property type="project" value="MGI"/>
</dbReference>
<dbReference type="GO" id="GO:0016607">
    <property type="term" value="C:nuclear speck"/>
    <property type="evidence" value="ECO:0000250"/>
    <property type="project" value="UniProtKB"/>
</dbReference>
<dbReference type="GO" id="GO:0005634">
    <property type="term" value="C:nucleus"/>
    <property type="evidence" value="ECO:0000250"/>
    <property type="project" value="UniProtKB"/>
</dbReference>
<dbReference type="GO" id="GO:0048471">
    <property type="term" value="C:perinuclear region of cytoplasm"/>
    <property type="evidence" value="ECO:0000250"/>
    <property type="project" value="UniProtKB"/>
</dbReference>
<dbReference type="GO" id="GO:0005524">
    <property type="term" value="F:ATP binding"/>
    <property type="evidence" value="ECO:0007669"/>
    <property type="project" value="UniProtKB-KW"/>
</dbReference>
<dbReference type="GO" id="GO:0140662">
    <property type="term" value="F:ATP-dependent protein folding chaperone"/>
    <property type="evidence" value="ECO:0007669"/>
    <property type="project" value="InterPro"/>
</dbReference>
<dbReference type="GO" id="GO:0044183">
    <property type="term" value="F:protein folding chaperone"/>
    <property type="evidence" value="ECO:0000314"/>
    <property type="project" value="UniProtKB"/>
</dbReference>
<dbReference type="GO" id="GO:0003714">
    <property type="term" value="F:transcription corepressor activity"/>
    <property type="evidence" value="ECO:0000250"/>
    <property type="project" value="UniProtKB"/>
</dbReference>
<dbReference type="GO" id="GO:0006281">
    <property type="term" value="P:DNA repair"/>
    <property type="evidence" value="ECO:0000315"/>
    <property type="project" value="MGI"/>
</dbReference>
<dbReference type="GO" id="GO:0007041">
    <property type="term" value="P:lysosomal transport"/>
    <property type="evidence" value="ECO:0000315"/>
    <property type="project" value="UniProtKB"/>
</dbReference>
<dbReference type="GO" id="GO:0006402">
    <property type="term" value="P:mRNA catabolic process"/>
    <property type="evidence" value="ECO:0000250"/>
    <property type="project" value="UniProtKB"/>
</dbReference>
<dbReference type="GO" id="GO:0030308">
    <property type="term" value="P:negative regulation of cell growth"/>
    <property type="evidence" value="ECO:0000250"/>
    <property type="project" value="UniProtKB"/>
</dbReference>
<dbReference type="GO" id="GO:0008285">
    <property type="term" value="P:negative regulation of cell population proliferation"/>
    <property type="evidence" value="ECO:0000250"/>
    <property type="project" value="UniProtKB"/>
</dbReference>
<dbReference type="GO" id="GO:0000122">
    <property type="term" value="P:negative regulation of transcription by RNA polymerase II"/>
    <property type="evidence" value="ECO:0000250"/>
    <property type="project" value="UniProtKB"/>
</dbReference>
<dbReference type="GO" id="GO:0090063">
    <property type="term" value="P:positive regulation of microtubule nucleation"/>
    <property type="evidence" value="ECO:0000250"/>
    <property type="project" value="UniProtKB"/>
</dbReference>
<dbReference type="GO" id="GO:0006457">
    <property type="term" value="P:protein folding"/>
    <property type="evidence" value="ECO:0000314"/>
    <property type="project" value="UniProtKB"/>
</dbReference>
<dbReference type="GO" id="GO:0042026">
    <property type="term" value="P:protein refolding"/>
    <property type="evidence" value="ECO:0000250"/>
    <property type="project" value="UniProtKB"/>
</dbReference>
<dbReference type="GO" id="GO:1901673">
    <property type="term" value="P:regulation of mitotic spindle assembly"/>
    <property type="evidence" value="ECO:0000250"/>
    <property type="project" value="UniProtKB"/>
</dbReference>
<dbReference type="GO" id="GO:0009408">
    <property type="term" value="P:response to heat"/>
    <property type="evidence" value="ECO:0000314"/>
    <property type="project" value="MGI"/>
</dbReference>
<dbReference type="GO" id="GO:0006986">
    <property type="term" value="P:response to unfolded protein"/>
    <property type="evidence" value="ECO:0000250"/>
    <property type="project" value="UniProtKB"/>
</dbReference>
<dbReference type="GO" id="GO:0000723">
    <property type="term" value="P:telomere maintenance"/>
    <property type="evidence" value="ECO:0000315"/>
    <property type="project" value="MGI"/>
</dbReference>
<dbReference type="CDD" id="cd10233">
    <property type="entry name" value="ASKHA_NBD_HSP70_HSPA1"/>
    <property type="match status" value="1"/>
</dbReference>
<dbReference type="FunFam" id="2.60.34.10:FF:000002">
    <property type="entry name" value="Heat shock 70 kDa"/>
    <property type="match status" value="1"/>
</dbReference>
<dbReference type="FunFam" id="3.30.420.40:FF:000172">
    <property type="entry name" value="Heat shock 70 kDa protein"/>
    <property type="match status" value="1"/>
</dbReference>
<dbReference type="FunFam" id="1.20.1270.10:FF:000053">
    <property type="entry name" value="Heat shock 70 kDa protein 1B"/>
    <property type="match status" value="1"/>
</dbReference>
<dbReference type="FunFam" id="3.30.30.30:FF:000001">
    <property type="entry name" value="heat shock 70 kDa protein-like"/>
    <property type="match status" value="1"/>
</dbReference>
<dbReference type="FunFam" id="3.30.420.40:FF:000028">
    <property type="entry name" value="heat shock 70 kDa protein-like"/>
    <property type="match status" value="1"/>
</dbReference>
<dbReference type="FunFam" id="3.30.420.40:FF:000135">
    <property type="entry name" value="Heat shock cognate 71 kDa protein"/>
    <property type="match status" value="1"/>
</dbReference>
<dbReference type="FunFam" id="3.90.640.10:FF:000134">
    <property type="entry name" value="Heat shock cognate 71 kDa protein"/>
    <property type="match status" value="1"/>
</dbReference>
<dbReference type="FunFam" id="3.30.420.40:FF:000026">
    <property type="entry name" value="Heat shock protein 70"/>
    <property type="match status" value="1"/>
</dbReference>
<dbReference type="Gene3D" id="1.20.1270.10">
    <property type="match status" value="1"/>
</dbReference>
<dbReference type="Gene3D" id="3.30.30.30">
    <property type="match status" value="1"/>
</dbReference>
<dbReference type="Gene3D" id="3.30.420.40">
    <property type="match status" value="2"/>
</dbReference>
<dbReference type="Gene3D" id="3.90.640.10">
    <property type="entry name" value="Actin, Chain A, domain 4"/>
    <property type="match status" value="1"/>
</dbReference>
<dbReference type="Gene3D" id="2.60.34.10">
    <property type="entry name" value="Substrate Binding Domain Of DNAk, Chain A, domain 1"/>
    <property type="match status" value="1"/>
</dbReference>
<dbReference type="InterPro" id="IPR043129">
    <property type="entry name" value="ATPase_NBD"/>
</dbReference>
<dbReference type="InterPro" id="IPR018181">
    <property type="entry name" value="Heat_shock_70_CS"/>
</dbReference>
<dbReference type="InterPro" id="IPR029048">
    <property type="entry name" value="HSP70_C_sf"/>
</dbReference>
<dbReference type="InterPro" id="IPR029047">
    <property type="entry name" value="HSP70_peptide-bd_sf"/>
</dbReference>
<dbReference type="InterPro" id="IPR013126">
    <property type="entry name" value="Hsp_70_fam"/>
</dbReference>
<dbReference type="NCBIfam" id="NF001413">
    <property type="entry name" value="PRK00290.1"/>
    <property type="match status" value="1"/>
</dbReference>
<dbReference type="PANTHER" id="PTHR19375">
    <property type="entry name" value="HEAT SHOCK PROTEIN 70KDA"/>
    <property type="match status" value="1"/>
</dbReference>
<dbReference type="Pfam" id="PF00012">
    <property type="entry name" value="HSP70"/>
    <property type="match status" value="1"/>
</dbReference>
<dbReference type="PRINTS" id="PR00301">
    <property type="entry name" value="HEATSHOCK70"/>
</dbReference>
<dbReference type="SUPFAM" id="SSF53067">
    <property type="entry name" value="Actin-like ATPase domain"/>
    <property type="match status" value="2"/>
</dbReference>
<dbReference type="SUPFAM" id="SSF100934">
    <property type="entry name" value="Heat shock protein 70kD (HSP70), C-terminal subdomain"/>
    <property type="match status" value="1"/>
</dbReference>
<dbReference type="SUPFAM" id="SSF100920">
    <property type="entry name" value="Heat shock protein 70kD (HSP70), peptide-binding domain"/>
    <property type="match status" value="1"/>
</dbReference>
<dbReference type="PROSITE" id="PS00297">
    <property type="entry name" value="HSP70_1"/>
    <property type="match status" value="1"/>
</dbReference>
<dbReference type="PROSITE" id="PS00329">
    <property type="entry name" value="HSP70_2"/>
    <property type="match status" value="1"/>
</dbReference>
<dbReference type="PROSITE" id="PS01036">
    <property type="entry name" value="HSP70_3"/>
    <property type="match status" value="1"/>
</dbReference>
<evidence type="ECO:0000250" key="1"/>
<evidence type="ECO:0000250" key="2">
    <source>
        <dbReference type="UniProtKB" id="P0DMV8"/>
    </source>
</evidence>
<evidence type="ECO:0000250" key="3">
    <source>
        <dbReference type="UniProtKB" id="P0DMW0"/>
    </source>
</evidence>
<evidence type="ECO:0000250" key="4">
    <source>
        <dbReference type="UniProtKB" id="P11142"/>
    </source>
</evidence>
<evidence type="ECO:0000256" key="5">
    <source>
        <dbReference type="SAM" id="MobiDB-lite"/>
    </source>
</evidence>
<evidence type="ECO:0000269" key="6">
    <source>
    </source>
</evidence>
<evidence type="ECO:0000269" key="7">
    <source>
    </source>
</evidence>
<evidence type="ECO:0000269" key="8">
    <source>
    </source>
</evidence>
<evidence type="ECO:0000305" key="9"/>
<evidence type="ECO:0007744" key="10">
    <source>
    </source>
</evidence>
<feature type="initiator methionine" description="Removed" evidence="2">
    <location>
        <position position="1"/>
    </location>
</feature>
<feature type="chain" id="PRO_0000078250" description="Heat shock 70 kDa protein 1A">
    <location>
        <begin position="2"/>
        <end position="641"/>
    </location>
</feature>
<feature type="region of interest" description="Nucleotide-binding domain (NBD)" evidence="4">
    <location>
        <begin position="2"/>
        <end position="386"/>
    </location>
</feature>
<feature type="region of interest" description="Substrate-binding domain (SBD)" evidence="4">
    <location>
        <begin position="394"/>
        <end position="509"/>
    </location>
</feature>
<feature type="region of interest" description="Disordered" evidence="5">
    <location>
        <begin position="618"/>
        <end position="641"/>
    </location>
</feature>
<feature type="binding site" evidence="1">
    <location>
        <begin position="12"/>
        <end position="15"/>
    </location>
    <ligand>
        <name>ATP</name>
        <dbReference type="ChEBI" id="CHEBI:30616"/>
    </ligand>
</feature>
<feature type="binding site" evidence="1">
    <location>
        <position position="71"/>
    </location>
    <ligand>
        <name>ATP</name>
        <dbReference type="ChEBI" id="CHEBI:30616"/>
    </ligand>
</feature>
<feature type="binding site" evidence="1">
    <location>
        <begin position="202"/>
        <end position="204"/>
    </location>
    <ligand>
        <name>ATP</name>
        <dbReference type="ChEBI" id="CHEBI:30616"/>
    </ligand>
</feature>
<feature type="binding site" evidence="1">
    <location>
        <begin position="268"/>
        <end position="275"/>
    </location>
    <ligand>
        <name>ATP</name>
        <dbReference type="ChEBI" id="CHEBI:30616"/>
    </ligand>
</feature>
<feature type="binding site" evidence="1">
    <location>
        <begin position="339"/>
        <end position="342"/>
    </location>
    <ligand>
        <name>ATP</name>
        <dbReference type="ChEBI" id="CHEBI:30616"/>
    </ligand>
</feature>
<feature type="modified residue" description="N-acetylalanine" evidence="2">
    <location>
        <position position="2"/>
    </location>
</feature>
<feature type="modified residue" description="N6-acetyllysine" evidence="2">
    <location>
        <position position="77"/>
    </location>
</feature>
<feature type="modified residue" description="N6-acetyllysine" evidence="2">
    <location>
        <position position="108"/>
    </location>
</feature>
<feature type="modified residue" description="N6-acetyllysine" evidence="2">
    <location>
        <position position="246"/>
    </location>
</feature>
<feature type="modified residue" description="N6-acetyllysine" evidence="2">
    <location>
        <position position="348"/>
    </location>
</feature>
<feature type="modified residue" description="Omega-N-methylarginine" evidence="2">
    <location>
        <position position="469"/>
    </location>
</feature>
<feature type="modified residue" description="N6,N6,N6-trimethyllysine; by METTL21A; alternate" evidence="2">
    <location>
        <position position="561"/>
    </location>
</feature>
<feature type="modified residue" description="N6,N6-dimethyllysine; alternate" evidence="2">
    <location>
        <position position="561"/>
    </location>
</feature>
<feature type="modified residue" description="Phosphoserine" evidence="10">
    <location>
        <position position="604"/>
    </location>
</feature>
<feature type="modified residue" description="Phosphoserine" evidence="2">
    <location>
        <position position="631"/>
    </location>
</feature>
<feature type="modified residue" description="Phosphoserine" evidence="2">
    <location>
        <position position="633"/>
    </location>
</feature>
<feature type="modified residue" description="Phosphothreonine" evidence="2">
    <location>
        <position position="636"/>
    </location>
</feature>
<feature type="sequence conflict" description="In Ref. 5; AAA57234." evidence="9" ref="5">
    <original>ATAGD</original>
    <variation>TDGRT</variation>
    <location>
        <begin position="221"/>
        <end position="225"/>
    </location>
</feature>
<feature type="sequence conflict" description="In Ref. 5; AAA57234." evidence="9" ref="5">
    <original>G</original>
    <variation>E</variation>
    <location>
        <position position="229"/>
    </location>
</feature>
<feature type="sequence conflict" description="In Ref. 5; AAA57234." evidence="9" ref="5">
    <original>F</original>
    <variation>V</variation>
    <location>
        <position position="233"/>
    </location>
</feature>
<feature type="sequence conflict" description="In Ref. 5; AAA57234." evidence="9" ref="5">
    <original>VSHFVEE</original>
    <variation>EDLREQ</variation>
    <location>
        <begin position="238"/>
        <end position="244"/>
    </location>
</feature>
<feature type="sequence conflict" description="In Ref. 5; AAA57234." evidence="9" ref="5">
    <original>T</original>
    <variation>R</variation>
    <location>
        <position position="295"/>
    </location>
</feature>
<feature type="sequence conflict" description="In Ref. 5; AAA57234." evidence="9" ref="5">
    <original>H</original>
    <variation>Q</variation>
    <location>
        <position position="332"/>
    </location>
</feature>
<feature type="sequence conflict" description="In Ref. 1; AAA57233." evidence="9" ref="1">
    <original>R</original>
    <variation>A</variation>
    <location>
        <position position="342"/>
    </location>
</feature>
<feature type="sequence conflict" description="In Ref. 5; AAA57235." evidence="9" ref="5">
    <original>V</original>
    <variation>G</variation>
    <location>
        <position position="409"/>
    </location>
</feature>
<feature type="sequence conflict" description="In Ref. 5; AAA57234/AAA57235." evidence="9" ref="5">
    <original>LIKR</original>
    <variation>RHQA</variation>
    <location>
        <begin position="413"/>
        <end position="416"/>
    </location>
</feature>
<feature type="sequence conflict" description="In Ref. 3; AAH54782." evidence="9" ref="3">
    <original>S</original>
    <variation>T</variation>
    <location>
        <position position="494"/>
    </location>
</feature>